<evidence type="ECO:0000269" key="1">
    <source>
    </source>
</evidence>
<evidence type="ECO:0000303" key="2">
    <source>
    </source>
</evidence>
<evidence type="ECO:0000305" key="3"/>
<evidence type="ECO:0000305" key="4">
    <source>
    </source>
</evidence>
<sequence>GIFSKFGGKAIKNLFIKGAKNIGKEVGMDVIRTGIDVAGCKIKGEC</sequence>
<feature type="peptide" id="PRO_0000366046" description="Esculentin-1HSa" evidence="1">
    <location>
        <begin position="1"/>
        <end position="46"/>
    </location>
</feature>
<feature type="disulfide bond">
    <location>
        <begin position="40"/>
        <end position="46"/>
    </location>
</feature>
<organism>
    <name type="scientific">Odorrana hosii</name>
    <name type="common">Hose's rock frog</name>
    <name type="synonym">Rana hosii</name>
    <dbReference type="NCBI Taxonomy" id="310666"/>
    <lineage>
        <taxon>Eukaryota</taxon>
        <taxon>Metazoa</taxon>
        <taxon>Chordata</taxon>
        <taxon>Craniata</taxon>
        <taxon>Vertebrata</taxon>
        <taxon>Euteleostomi</taxon>
        <taxon>Amphibia</taxon>
        <taxon>Batrachia</taxon>
        <taxon>Anura</taxon>
        <taxon>Neobatrachia</taxon>
        <taxon>Ranoidea</taxon>
        <taxon>Ranidae</taxon>
        <taxon>Odorrana</taxon>
    </lineage>
</organism>
<dbReference type="GO" id="GO:0005576">
    <property type="term" value="C:extracellular region"/>
    <property type="evidence" value="ECO:0007669"/>
    <property type="project" value="UniProtKB-SubCell"/>
</dbReference>
<dbReference type="GO" id="GO:0042742">
    <property type="term" value="P:defense response to bacterium"/>
    <property type="evidence" value="ECO:0007669"/>
    <property type="project" value="UniProtKB-KW"/>
</dbReference>
<protein>
    <recommendedName>
        <fullName evidence="2">Esculentin-1HSa</fullName>
    </recommendedName>
</protein>
<keyword id="KW-0878">Amphibian defense peptide</keyword>
<keyword id="KW-0044">Antibiotic</keyword>
<keyword id="KW-0929">Antimicrobial</keyword>
<keyword id="KW-0903">Direct protein sequencing</keyword>
<keyword id="KW-1015">Disulfide bond</keyword>
<keyword id="KW-0964">Secreted</keyword>
<accession>P0C8T8</accession>
<comment type="function">
    <text evidence="1">Has antibacterial activity against the Gram-positive bacterium S.aureus ATCC 25923 (MIC=12 uM) and the Gram-negative bacterium E.coli ATCC 25726 (MIC=12 uM).</text>
</comment>
<comment type="subcellular location">
    <subcellularLocation>
        <location evidence="1">Secreted</location>
    </subcellularLocation>
</comment>
<comment type="tissue specificity">
    <text evidence="4">Expressed by the skin glands.</text>
</comment>
<comment type="mass spectrometry"/>
<comment type="similarity">
    <text evidence="3">Belongs to the frog skin active peptide (FSAP) family. Esculentin subfamily.</text>
</comment>
<comment type="online information" name="The antimicrobial peptide database">
    <link uri="https://wangapd3.com/database/query_output.php?ID=01419"/>
</comment>
<reference key="1">
    <citation type="journal article" date="2008" name="Toxicon">
        <title>Characterization of antimicrobial peptides from the skin secretions of the Malaysian frogs, Odorrana hosii and Hylarana picturata (Anura:Ranidae).</title>
        <authorList>
            <person name="Conlon J.M."/>
            <person name="Kolodziejek J."/>
            <person name="Nowotny N."/>
            <person name="Leprince J."/>
            <person name="Vaudry H."/>
            <person name="Coquet L."/>
            <person name="Jouenne T."/>
            <person name="King J.D."/>
        </authorList>
    </citation>
    <scope>PROTEIN SEQUENCE</scope>
    <scope>FUNCTION</scope>
    <scope>MASS SPECTROMETRY</scope>
    <scope>SUBCELLULAR LOCATION</scope>
    <source>
        <tissue>Skin secretion</tissue>
    </source>
</reference>
<name>ES1HA_ODOHO</name>
<proteinExistence type="evidence at protein level"/>